<evidence type="ECO:0000255" key="1">
    <source>
        <dbReference type="HAMAP-Rule" id="MF_01517"/>
    </source>
</evidence>
<reference key="1">
    <citation type="submission" date="2007-11" db="EMBL/GenBank/DDBJ databases">
        <title>Genome sequencing of phylogenetically and phenotypically diverse Coxiella burnetii isolates.</title>
        <authorList>
            <person name="Seshadri R."/>
            <person name="Samuel J.E."/>
        </authorList>
    </citation>
    <scope>NUCLEOTIDE SEQUENCE [LARGE SCALE GENOMIC DNA]</scope>
    <source>
        <strain>RSA 331 / Henzerling II</strain>
    </source>
</reference>
<organism>
    <name type="scientific">Coxiella burnetii (strain RSA 331 / Henzerling II)</name>
    <dbReference type="NCBI Taxonomy" id="360115"/>
    <lineage>
        <taxon>Bacteria</taxon>
        <taxon>Pseudomonadati</taxon>
        <taxon>Pseudomonadota</taxon>
        <taxon>Gammaproteobacteria</taxon>
        <taxon>Legionellales</taxon>
        <taxon>Coxiellaceae</taxon>
        <taxon>Coxiella</taxon>
    </lineage>
</organism>
<feature type="chain" id="PRO_1000087543" description="Malate dehydrogenase">
    <location>
        <begin position="1"/>
        <end position="328"/>
    </location>
</feature>
<feature type="active site" description="Proton acceptor" evidence="1">
    <location>
        <position position="187"/>
    </location>
</feature>
<feature type="binding site" evidence="1">
    <location>
        <begin position="11"/>
        <end position="17"/>
    </location>
    <ligand>
        <name>NAD(+)</name>
        <dbReference type="ChEBI" id="CHEBI:57540"/>
    </ligand>
</feature>
<feature type="binding site" evidence="1">
    <location>
        <position position="92"/>
    </location>
    <ligand>
        <name>substrate</name>
    </ligand>
</feature>
<feature type="binding site" evidence="1">
    <location>
        <position position="98"/>
    </location>
    <ligand>
        <name>substrate</name>
    </ligand>
</feature>
<feature type="binding site" evidence="1">
    <location>
        <position position="105"/>
    </location>
    <ligand>
        <name>NAD(+)</name>
        <dbReference type="ChEBI" id="CHEBI:57540"/>
    </ligand>
</feature>
<feature type="binding site" evidence="1">
    <location>
        <position position="112"/>
    </location>
    <ligand>
        <name>NAD(+)</name>
        <dbReference type="ChEBI" id="CHEBI:57540"/>
    </ligand>
</feature>
<feature type="binding site" evidence="1">
    <location>
        <begin position="129"/>
        <end position="131"/>
    </location>
    <ligand>
        <name>NAD(+)</name>
        <dbReference type="ChEBI" id="CHEBI:57540"/>
    </ligand>
</feature>
<feature type="binding site" evidence="1">
    <location>
        <position position="131"/>
    </location>
    <ligand>
        <name>substrate</name>
    </ligand>
</feature>
<feature type="binding site" evidence="1">
    <location>
        <position position="162"/>
    </location>
    <ligand>
        <name>substrate</name>
    </ligand>
</feature>
<sequence>MAKHVKVAVTGAAGQIGYALLFRLASGQAFGLDTTVDLHLLEIEPALPALKGVVMELEDCAFPLLRNMVVTSDPRVAFNDVNWALLVGAAPRKAGMERKDLLEKNGSIFAGQGKAINENAASDVRIFVVGNPCNTNCLIAMNNAPDIPKDRFYAMTRLDQNRAIGQLALKAGVDVPSVKNMIIWGNHSSTQYPDFYHATIDGKPATEVIRDKNWLLNDFIPVIQQRGAAVIKARGASSAASAANAALDSVWSLINTTPADDNYSVALCAQGQYGVDEGLIFSFPCRTENGVVSVIEEIEHNEFGQQKLKETLDELREERDAVEALGLI</sequence>
<gene>
    <name evidence="1" type="primary">mdh</name>
    <name type="ordered locus">COXBURSA331_A1384</name>
</gene>
<proteinExistence type="inferred from homology"/>
<keyword id="KW-0520">NAD</keyword>
<keyword id="KW-0560">Oxidoreductase</keyword>
<keyword id="KW-0816">Tricarboxylic acid cycle</keyword>
<name>MDH_COXBR</name>
<protein>
    <recommendedName>
        <fullName evidence="1">Malate dehydrogenase</fullName>
        <ecNumber evidence="1">1.1.1.37</ecNumber>
    </recommendedName>
</protein>
<accession>A9NDV1</accession>
<dbReference type="EC" id="1.1.1.37" evidence="1"/>
<dbReference type="EMBL" id="CP000890">
    <property type="protein sequence ID" value="ABX78504.1"/>
    <property type="molecule type" value="Genomic_DNA"/>
</dbReference>
<dbReference type="RefSeq" id="WP_005770796.1">
    <property type="nucleotide sequence ID" value="NC_010117.1"/>
</dbReference>
<dbReference type="SMR" id="A9NDV1"/>
<dbReference type="KEGG" id="cbs:COXBURSA331_A1384"/>
<dbReference type="HOGENOM" id="CLU_040727_2_0_6"/>
<dbReference type="GO" id="GO:0030060">
    <property type="term" value="F:L-malate dehydrogenase (NAD+) activity"/>
    <property type="evidence" value="ECO:0007669"/>
    <property type="project" value="UniProtKB-UniRule"/>
</dbReference>
<dbReference type="GO" id="GO:0006108">
    <property type="term" value="P:malate metabolic process"/>
    <property type="evidence" value="ECO:0007669"/>
    <property type="project" value="InterPro"/>
</dbReference>
<dbReference type="GO" id="GO:0006099">
    <property type="term" value="P:tricarboxylic acid cycle"/>
    <property type="evidence" value="ECO:0007669"/>
    <property type="project" value="UniProtKB-UniRule"/>
</dbReference>
<dbReference type="CDD" id="cd01338">
    <property type="entry name" value="MDH_chloroplast-like"/>
    <property type="match status" value="1"/>
</dbReference>
<dbReference type="FunFam" id="3.40.50.720:FF:000010">
    <property type="entry name" value="Malate dehydrogenase"/>
    <property type="match status" value="1"/>
</dbReference>
<dbReference type="FunFam" id="3.90.110.10:FF:000002">
    <property type="entry name" value="Malate dehydrogenase"/>
    <property type="match status" value="1"/>
</dbReference>
<dbReference type="Gene3D" id="3.90.110.10">
    <property type="entry name" value="Lactate dehydrogenase/glycoside hydrolase, family 4, C-terminal"/>
    <property type="match status" value="1"/>
</dbReference>
<dbReference type="Gene3D" id="3.40.50.720">
    <property type="entry name" value="NAD(P)-binding Rossmann-like Domain"/>
    <property type="match status" value="1"/>
</dbReference>
<dbReference type="HAMAP" id="MF_01517">
    <property type="entry name" value="Malate_dehydrog_2"/>
    <property type="match status" value="1"/>
</dbReference>
<dbReference type="InterPro" id="IPR001557">
    <property type="entry name" value="L-lactate/malate_DH"/>
</dbReference>
<dbReference type="InterPro" id="IPR022383">
    <property type="entry name" value="Lactate/malate_DH_C"/>
</dbReference>
<dbReference type="InterPro" id="IPR001236">
    <property type="entry name" value="Lactate/malate_DH_N"/>
</dbReference>
<dbReference type="InterPro" id="IPR015955">
    <property type="entry name" value="Lactate_DH/Glyco_Ohase_4_C"/>
</dbReference>
<dbReference type="InterPro" id="IPR001252">
    <property type="entry name" value="Malate_DH_AS"/>
</dbReference>
<dbReference type="InterPro" id="IPR010945">
    <property type="entry name" value="Malate_DH_type2"/>
</dbReference>
<dbReference type="InterPro" id="IPR036291">
    <property type="entry name" value="NAD(P)-bd_dom_sf"/>
</dbReference>
<dbReference type="NCBIfam" id="TIGR01759">
    <property type="entry name" value="MalateDH-SF1"/>
    <property type="match status" value="1"/>
</dbReference>
<dbReference type="NCBIfam" id="NF003916">
    <property type="entry name" value="PRK05442.1"/>
    <property type="match status" value="1"/>
</dbReference>
<dbReference type="PANTHER" id="PTHR23382">
    <property type="entry name" value="MALATE DEHYDROGENASE"/>
    <property type="match status" value="1"/>
</dbReference>
<dbReference type="Pfam" id="PF02866">
    <property type="entry name" value="Ldh_1_C"/>
    <property type="match status" value="1"/>
</dbReference>
<dbReference type="Pfam" id="PF00056">
    <property type="entry name" value="Ldh_1_N"/>
    <property type="match status" value="1"/>
</dbReference>
<dbReference type="PIRSF" id="PIRSF000102">
    <property type="entry name" value="Lac_mal_DH"/>
    <property type="match status" value="1"/>
</dbReference>
<dbReference type="SUPFAM" id="SSF56327">
    <property type="entry name" value="LDH C-terminal domain-like"/>
    <property type="match status" value="1"/>
</dbReference>
<dbReference type="SUPFAM" id="SSF51735">
    <property type="entry name" value="NAD(P)-binding Rossmann-fold domains"/>
    <property type="match status" value="1"/>
</dbReference>
<dbReference type="PROSITE" id="PS00068">
    <property type="entry name" value="MDH"/>
    <property type="match status" value="1"/>
</dbReference>
<comment type="function">
    <text evidence="1">Catalyzes the reversible oxidation of malate to oxaloacetate.</text>
</comment>
<comment type="catalytic activity">
    <reaction evidence="1">
        <text>(S)-malate + NAD(+) = oxaloacetate + NADH + H(+)</text>
        <dbReference type="Rhea" id="RHEA:21432"/>
        <dbReference type="ChEBI" id="CHEBI:15378"/>
        <dbReference type="ChEBI" id="CHEBI:15589"/>
        <dbReference type="ChEBI" id="CHEBI:16452"/>
        <dbReference type="ChEBI" id="CHEBI:57540"/>
        <dbReference type="ChEBI" id="CHEBI:57945"/>
        <dbReference type="EC" id="1.1.1.37"/>
    </reaction>
</comment>
<comment type="similarity">
    <text evidence="1">Belongs to the LDH/MDH superfamily. MDH type 2 family.</text>
</comment>